<feature type="chain" id="PRO_0000067566" description="Urease subunit alpha">
    <location>
        <begin position="1"/>
        <end position="572"/>
    </location>
</feature>
<feature type="domain" description="Urease" evidence="1">
    <location>
        <begin position="134"/>
        <end position="572"/>
    </location>
</feature>
<feature type="active site" description="Proton donor" evidence="1">
    <location>
        <position position="325"/>
    </location>
</feature>
<feature type="binding site" evidence="1">
    <location>
        <position position="139"/>
    </location>
    <ligand>
        <name>Ni(2+)</name>
        <dbReference type="ChEBI" id="CHEBI:49786"/>
        <label>1</label>
    </ligand>
</feature>
<feature type="binding site" evidence="1">
    <location>
        <position position="141"/>
    </location>
    <ligand>
        <name>Ni(2+)</name>
        <dbReference type="ChEBI" id="CHEBI:49786"/>
        <label>1</label>
    </ligand>
</feature>
<feature type="binding site" description="via carbamate group" evidence="1">
    <location>
        <position position="222"/>
    </location>
    <ligand>
        <name>Ni(2+)</name>
        <dbReference type="ChEBI" id="CHEBI:49786"/>
        <label>1</label>
    </ligand>
</feature>
<feature type="binding site" description="via carbamate group" evidence="1">
    <location>
        <position position="222"/>
    </location>
    <ligand>
        <name>Ni(2+)</name>
        <dbReference type="ChEBI" id="CHEBI:49786"/>
        <label>2</label>
    </ligand>
</feature>
<feature type="binding site" evidence="1">
    <location>
        <position position="224"/>
    </location>
    <ligand>
        <name>substrate</name>
    </ligand>
</feature>
<feature type="binding site" evidence="1">
    <location>
        <position position="251"/>
    </location>
    <ligand>
        <name>Ni(2+)</name>
        <dbReference type="ChEBI" id="CHEBI:49786"/>
        <label>2</label>
    </ligand>
</feature>
<feature type="binding site" evidence="1">
    <location>
        <position position="277"/>
    </location>
    <ligand>
        <name>Ni(2+)</name>
        <dbReference type="ChEBI" id="CHEBI:49786"/>
        <label>2</label>
    </ligand>
</feature>
<feature type="binding site" evidence="1">
    <location>
        <position position="365"/>
    </location>
    <ligand>
        <name>Ni(2+)</name>
        <dbReference type="ChEBI" id="CHEBI:49786"/>
        <label>1</label>
    </ligand>
</feature>
<feature type="modified residue" description="N6-carboxylysine" evidence="1">
    <location>
        <position position="222"/>
    </location>
</feature>
<keyword id="KW-0963">Cytoplasm</keyword>
<keyword id="KW-0378">Hydrolase</keyword>
<keyword id="KW-0479">Metal-binding</keyword>
<keyword id="KW-0533">Nickel</keyword>
<keyword id="KW-1185">Reference proteome</keyword>
<proteinExistence type="inferred from homology"/>
<protein>
    <recommendedName>
        <fullName evidence="1">Urease subunit alpha</fullName>
        <ecNumber evidence="1">3.5.1.5</ecNumber>
    </recommendedName>
    <alternativeName>
        <fullName evidence="1">Urea amidohydrolase subunit alpha</fullName>
    </alternativeName>
</protein>
<gene>
    <name evidence="1" type="primary">ureC</name>
    <name type="ordered locus">YPO2667</name>
    <name type="ordered locus">y1239</name>
    <name type="ordered locus">YP_2468</name>
</gene>
<dbReference type="EC" id="3.5.1.5" evidence="1"/>
<dbReference type="EMBL" id="AF095636">
    <property type="protein sequence ID" value="AAC78634.1"/>
    <property type="molecule type" value="Genomic_DNA"/>
</dbReference>
<dbReference type="EMBL" id="AL590842">
    <property type="protein sequence ID" value="CAL21286.1"/>
    <property type="molecule type" value="Genomic_DNA"/>
</dbReference>
<dbReference type="EMBL" id="AE009952">
    <property type="protein sequence ID" value="AAM84814.1"/>
    <property type="status" value="ALT_INIT"/>
    <property type="molecule type" value="Genomic_DNA"/>
</dbReference>
<dbReference type="EMBL" id="AE017042">
    <property type="protein sequence ID" value="AAS62668.1"/>
    <property type="molecule type" value="Genomic_DNA"/>
</dbReference>
<dbReference type="PIR" id="AC0325">
    <property type="entry name" value="AC0325"/>
</dbReference>
<dbReference type="RefSeq" id="WP_002212229.1">
    <property type="nucleotide sequence ID" value="NZ_WUCM01000006.1"/>
</dbReference>
<dbReference type="RefSeq" id="YP_002347616.1">
    <property type="nucleotide sequence ID" value="NC_003143.1"/>
</dbReference>
<dbReference type="SMR" id="Q9ZFR9"/>
<dbReference type="IntAct" id="Q9ZFR9">
    <property type="interactions" value="5"/>
</dbReference>
<dbReference type="STRING" id="214092.YPO2667"/>
<dbReference type="MEROPS" id="M38.982"/>
<dbReference type="PaxDb" id="214092-YPO2667"/>
<dbReference type="EnsemblBacteria" id="AAS62668">
    <property type="protein sequence ID" value="AAS62668"/>
    <property type="gene ID" value="YP_2468"/>
</dbReference>
<dbReference type="KEGG" id="ype:YPO2667"/>
<dbReference type="KEGG" id="ypk:y1239"/>
<dbReference type="KEGG" id="ypm:YP_2468"/>
<dbReference type="PATRIC" id="fig|214092.21.peg.3101"/>
<dbReference type="eggNOG" id="COG0804">
    <property type="taxonomic scope" value="Bacteria"/>
</dbReference>
<dbReference type="HOGENOM" id="CLU_000980_2_0_6"/>
<dbReference type="OMA" id="ACALKVH"/>
<dbReference type="OrthoDB" id="9802793at2"/>
<dbReference type="UniPathway" id="UPA00258">
    <property type="reaction ID" value="UER00370"/>
</dbReference>
<dbReference type="Proteomes" id="UP000000815">
    <property type="component" value="Chromosome"/>
</dbReference>
<dbReference type="Proteomes" id="UP000001019">
    <property type="component" value="Chromosome"/>
</dbReference>
<dbReference type="Proteomes" id="UP000002490">
    <property type="component" value="Chromosome"/>
</dbReference>
<dbReference type="GO" id="GO:0005737">
    <property type="term" value="C:cytoplasm"/>
    <property type="evidence" value="ECO:0007669"/>
    <property type="project" value="UniProtKB-SubCell"/>
</dbReference>
<dbReference type="GO" id="GO:0016151">
    <property type="term" value="F:nickel cation binding"/>
    <property type="evidence" value="ECO:0007669"/>
    <property type="project" value="UniProtKB-UniRule"/>
</dbReference>
<dbReference type="GO" id="GO:0009039">
    <property type="term" value="F:urease activity"/>
    <property type="evidence" value="ECO:0007669"/>
    <property type="project" value="UniProtKB-UniRule"/>
</dbReference>
<dbReference type="GO" id="GO:0043419">
    <property type="term" value="P:urea catabolic process"/>
    <property type="evidence" value="ECO:0007669"/>
    <property type="project" value="UniProtKB-UniRule"/>
</dbReference>
<dbReference type="CDD" id="cd00375">
    <property type="entry name" value="Urease_alpha"/>
    <property type="match status" value="1"/>
</dbReference>
<dbReference type="Gene3D" id="3.20.20.140">
    <property type="entry name" value="Metal-dependent hydrolases"/>
    <property type="match status" value="1"/>
</dbReference>
<dbReference type="Gene3D" id="2.30.40.10">
    <property type="entry name" value="Urease, subunit C, domain 1"/>
    <property type="match status" value="1"/>
</dbReference>
<dbReference type="HAMAP" id="MF_01953">
    <property type="entry name" value="Urease_alpha"/>
    <property type="match status" value="1"/>
</dbReference>
<dbReference type="InterPro" id="IPR006680">
    <property type="entry name" value="Amidohydro-rel"/>
</dbReference>
<dbReference type="InterPro" id="IPR011059">
    <property type="entry name" value="Metal-dep_hydrolase_composite"/>
</dbReference>
<dbReference type="InterPro" id="IPR032466">
    <property type="entry name" value="Metal_Hydrolase"/>
</dbReference>
<dbReference type="InterPro" id="IPR011612">
    <property type="entry name" value="Urease_alpha_N_dom"/>
</dbReference>
<dbReference type="InterPro" id="IPR050112">
    <property type="entry name" value="Urease_alpha_subunit"/>
</dbReference>
<dbReference type="InterPro" id="IPR017950">
    <property type="entry name" value="Urease_AS"/>
</dbReference>
<dbReference type="InterPro" id="IPR005848">
    <property type="entry name" value="Urease_asu"/>
</dbReference>
<dbReference type="InterPro" id="IPR017951">
    <property type="entry name" value="Urease_asu_c"/>
</dbReference>
<dbReference type="InterPro" id="IPR029754">
    <property type="entry name" value="Urease_Ni-bd"/>
</dbReference>
<dbReference type="NCBIfam" id="NF009686">
    <property type="entry name" value="PRK13207.1"/>
    <property type="match status" value="1"/>
</dbReference>
<dbReference type="NCBIfam" id="NF009834">
    <property type="entry name" value="PRK13309.1"/>
    <property type="match status" value="1"/>
</dbReference>
<dbReference type="NCBIfam" id="TIGR01792">
    <property type="entry name" value="urease_alph"/>
    <property type="match status" value="1"/>
</dbReference>
<dbReference type="PANTHER" id="PTHR43440">
    <property type="entry name" value="UREASE"/>
    <property type="match status" value="1"/>
</dbReference>
<dbReference type="PANTHER" id="PTHR43440:SF1">
    <property type="entry name" value="UREASE"/>
    <property type="match status" value="1"/>
</dbReference>
<dbReference type="Pfam" id="PF01979">
    <property type="entry name" value="Amidohydro_1"/>
    <property type="match status" value="1"/>
</dbReference>
<dbReference type="Pfam" id="PF00449">
    <property type="entry name" value="Urease_alpha"/>
    <property type="match status" value="1"/>
</dbReference>
<dbReference type="PRINTS" id="PR01752">
    <property type="entry name" value="UREASE"/>
</dbReference>
<dbReference type="SUPFAM" id="SSF51338">
    <property type="entry name" value="Composite domain of metallo-dependent hydrolases"/>
    <property type="match status" value="1"/>
</dbReference>
<dbReference type="SUPFAM" id="SSF51556">
    <property type="entry name" value="Metallo-dependent hydrolases"/>
    <property type="match status" value="1"/>
</dbReference>
<dbReference type="PROSITE" id="PS01120">
    <property type="entry name" value="UREASE_1"/>
    <property type="match status" value="1"/>
</dbReference>
<dbReference type="PROSITE" id="PS00145">
    <property type="entry name" value="UREASE_2"/>
    <property type="match status" value="1"/>
</dbReference>
<dbReference type="PROSITE" id="PS51368">
    <property type="entry name" value="UREASE_3"/>
    <property type="match status" value="1"/>
</dbReference>
<name>URE1_YERPE</name>
<organism>
    <name type="scientific">Yersinia pestis</name>
    <dbReference type="NCBI Taxonomy" id="632"/>
    <lineage>
        <taxon>Bacteria</taxon>
        <taxon>Pseudomonadati</taxon>
        <taxon>Pseudomonadota</taxon>
        <taxon>Gammaproteobacteria</taxon>
        <taxon>Enterobacterales</taxon>
        <taxon>Yersiniaceae</taxon>
        <taxon>Yersinia</taxon>
    </lineage>
</organism>
<comment type="catalytic activity">
    <reaction evidence="1">
        <text>urea + 2 H2O + H(+) = hydrogencarbonate + 2 NH4(+)</text>
        <dbReference type="Rhea" id="RHEA:20557"/>
        <dbReference type="ChEBI" id="CHEBI:15377"/>
        <dbReference type="ChEBI" id="CHEBI:15378"/>
        <dbReference type="ChEBI" id="CHEBI:16199"/>
        <dbReference type="ChEBI" id="CHEBI:17544"/>
        <dbReference type="ChEBI" id="CHEBI:28938"/>
        <dbReference type="EC" id="3.5.1.5"/>
    </reaction>
</comment>
<comment type="cofactor">
    <cofactor evidence="1">
        <name>Ni cation</name>
        <dbReference type="ChEBI" id="CHEBI:25516"/>
    </cofactor>
    <text evidence="1">Binds 2 nickel ions per subunit.</text>
</comment>
<comment type="pathway">
    <text evidence="1">Nitrogen metabolism; urea degradation; CO(2) and NH(3) from urea (urease route): step 1/1.</text>
</comment>
<comment type="subunit">
    <text evidence="1">Heterotrimer of UreA (gamma), UreB (beta) and UreC (alpha) subunits. Three heterotrimers associate to form the active enzyme.</text>
</comment>
<comment type="subcellular location">
    <subcellularLocation>
        <location evidence="1">Cytoplasm</location>
    </subcellularLocation>
</comment>
<comment type="PTM">
    <text evidence="1">Carboxylation allows a single lysine to coordinate two nickel ions.</text>
</comment>
<comment type="similarity">
    <text evidence="1">Belongs to the metallo-dependent hydrolases superfamily. Urease alpha subunit family.</text>
</comment>
<comment type="caution">
    <text evidence="3">The last gene of this probable operon, ureD, gives rise to a truncated protein. Absence of ureD prevents expression of active urease. Correction of the mutation does not effect virulence in mice in any detectable fashion, suggesting urease is not important in the virulence of Y.pestis (PubMed:11119503).</text>
</comment>
<comment type="sequence caution" evidence="2">
    <conflict type="erroneous initiation">
        <sequence resource="EMBL-CDS" id="AAM84814"/>
    </conflict>
</comment>
<sequence>MPQISRQEYAGLFGPTTGDKIRLGDTNLFIEIEKDLRGYGEESVYGGGKSLRDGMGANNNLTRDNGVLDLVITNVTIVDARLGVIKADVGIRDGKIAGIGKSGNPGVMDGVTQGMVVGVSTDAISGEHLILTAAGIDSHIHLISPQQAYHALSNGVATFFGGGIGPTDGTNGTTVTPGPWNIRQMLRSIEGLPVNVGILGKGNSYGRGPLLEQAIAGVVGYKVHEDWGATANALRHALRMADEVDIQVSVHTDSLNECGYVEDTIDAFEGRTIHTFHTEGAGGGHAPDIIRVASQTNVLPSSTNPTLPYGVNSQAELFDMIMVCHNLNPNVPADVSFAESRVRPETIAAENVLHDMGVISMFSSDSQAMGRVGENWLRILQTADAMKAARGKLPEDAAGNDNFRVLRYVAKITINPAITQGVSHVIGSVEVGKMADLVLWDPRFFGAKPKMVIKGGMINWAAMGDPNASLPTPQPVFYRPMFGAMGKTLQDTCVTFVSQAALDDGVKEKAGLDRQVIAVKNCRTISKRDLVRNDQTPNIEVDPETFAVKVDGVHATCEPIATASMNQRYFFG</sequence>
<accession>Q9ZFR9</accession>
<accession>Q0WDM2</accession>
<evidence type="ECO:0000255" key="1">
    <source>
        <dbReference type="HAMAP-Rule" id="MF_01953"/>
    </source>
</evidence>
<evidence type="ECO:0000305" key="2"/>
<evidence type="ECO:0000305" key="3">
    <source>
    </source>
</evidence>
<reference key="1">
    <citation type="journal article" date="2001" name="Infect. Immun.">
        <title>Silencing and reactivation of urease in Yersinia pestis is determined by one G residue at a specific position in the ureD gene.</title>
        <authorList>
            <person name="Sebbane F."/>
            <person name="Devalckenaere A."/>
            <person name="Foulon J."/>
            <person name="Carniel E."/>
            <person name="Simonet M."/>
        </authorList>
    </citation>
    <scope>NUCLEOTIDE SEQUENCE [GENOMIC DNA]</scope>
    <scope>LACK OF ROLE IN VIRULENCE</scope>
    <source>
        <strain>6/69M</strain>
    </source>
</reference>
<reference key="2">
    <citation type="journal article" date="2001" name="Nature">
        <title>Genome sequence of Yersinia pestis, the causative agent of plague.</title>
        <authorList>
            <person name="Parkhill J."/>
            <person name="Wren B.W."/>
            <person name="Thomson N.R."/>
            <person name="Titball R.W."/>
            <person name="Holden M.T.G."/>
            <person name="Prentice M.B."/>
            <person name="Sebaihia M."/>
            <person name="James K.D."/>
            <person name="Churcher C.M."/>
            <person name="Mungall K.L."/>
            <person name="Baker S."/>
            <person name="Basham D."/>
            <person name="Bentley S.D."/>
            <person name="Brooks K."/>
            <person name="Cerdeno-Tarraga A.-M."/>
            <person name="Chillingworth T."/>
            <person name="Cronin A."/>
            <person name="Davies R.M."/>
            <person name="Davis P."/>
            <person name="Dougan G."/>
            <person name="Feltwell T."/>
            <person name="Hamlin N."/>
            <person name="Holroyd S."/>
            <person name="Jagels K."/>
            <person name="Karlyshev A.V."/>
            <person name="Leather S."/>
            <person name="Moule S."/>
            <person name="Oyston P.C.F."/>
            <person name="Quail M.A."/>
            <person name="Rutherford K.M."/>
            <person name="Simmonds M."/>
            <person name="Skelton J."/>
            <person name="Stevens K."/>
            <person name="Whitehead S."/>
            <person name="Barrell B.G."/>
        </authorList>
    </citation>
    <scope>NUCLEOTIDE SEQUENCE [LARGE SCALE GENOMIC DNA]</scope>
    <source>
        <strain>CO-92 / Biovar Orientalis</strain>
    </source>
</reference>
<reference key="3">
    <citation type="journal article" date="2002" name="J. Bacteriol.">
        <title>Genome sequence of Yersinia pestis KIM.</title>
        <authorList>
            <person name="Deng W."/>
            <person name="Burland V."/>
            <person name="Plunkett G. III"/>
            <person name="Boutin A."/>
            <person name="Mayhew G.F."/>
            <person name="Liss P."/>
            <person name="Perna N.T."/>
            <person name="Rose D.J."/>
            <person name="Mau B."/>
            <person name="Zhou S."/>
            <person name="Schwartz D.C."/>
            <person name="Fetherston J.D."/>
            <person name="Lindler L.E."/>
            <person name="Brubaker R.R."/>
            <person name="Plano G.V."/>
            <person name="Straley S.C."/>
            <person name="McDonough K.A."/>
            <person name="Nilles M.L."/>
            <person name="Matson J.S."/>
            <person name="Blattner F.R."/>
            <person name="Perry R.D."/>
        </authorList>
    </citation>
    <scope>NUCLEOTIDE SEQUENCE [LARGE SCALE GENOMIC DNA]</scope>
    <source>
        <strain>KIM10+ / Biovar Mediaevalis</strain>
    </source>
</reference>
<reference key="4">
    <citation type="journal article" date="2004" name="DNA Res.">
        <title>Complete genome sequence of Yersinia pestis strain 91001, an isolate avirulent to humans.</title>
        <authorList>
            <person name="Song Y."/>
            <person name="Tong Z."/>
            <person name="Wang J."/>
            <person name="Wang L."/>
            <person name="Guo Z."/>
            <person name="Han Y."/>
            <person name="Zhang J."/>
            <person name="Pei D."/>
            <person name="Zhou D."/>
            <person name="Qin H."/>
            <person name="Pang X."/>
            <person name="Han Y."/>
            <person name="Zhai J."/>
            <person name="Li M."/>
            <person name="Cui B."/>
            <person name="Qi Z."/>
            <person name="Jin L."/>
            <person name="Dai R."/>
            <person name="Chen F."/>
            <person name="Li S."/>
            <person name="Ye C."/>
            <person name="Du Z."/>
            <person name="Lin W."/>
            <person name="Wang J."/>
            <person name="Yu J."/>
            <person name="Yang H."/>
            <person name="Wang J."/>
            <person name="Huang P."/>
            <person name="Yang R."/>
        </authorList>
    </citation>
    <scope>NUCLEOTIDE SEQUENCE [LARGE SCALE GENOMIC DNA]</scope>
    <source>
        <strain>91001 / Biovar Mediaevalis</strain>
    </source>
</reference>